<comment type="function">
    <text evidence="3">Transcriptional regulator that postively regulates the expression of the gene cluster that mediates the biosynthesis of flavoglaucin and congeners (including aspergin, dihydroauroglaucin and auroglaucin), prenylated salicylaldehyde derivatives carrying a saturated or an unsaturated C-7 side chain.</text>
</comment>
<comment type="subcellular location">
    <subcellularLocation>
        <location evidence="1">Nucleus</location>
    </subcellularLocation>
</comment>
<comment type="disruption phenotype">
    <text evidence="3">Leads to complete abolishment of the production of flavoglaucin and its congeners.</text>
</comment>
<keyword id="KW-0238">DNA-binding</keyword>
<keyword id="KW-0539">Nucleus</keyword>
<keyword id="KW-1185">Reference proteome</keyword>
<keyword id="KW-0804">Transcription</keyword>
<keyword id="KW-0805">Transcription regulation</keyword>
<keyword id="KW-0862">Zinc</keyword>
<gene>
    <name evidence="4" type="primary">fogI</name>
    <name type="ORF">EURHEDRAFT_402538</name>
</gene>
<evidence type="ECO:0000255" key="1">
    <source>
        <dbReference type="PROSITE-ProRule" id="PRU00227"/>
    </source>
</evidence>
<evidence type="ECO:0000256" key="2">
    <source>
        <dbReference type="SAM" id="MobiDB-lite"/>
    </source>
</evidence>
<evidence type="ECO:0000269" key="3">
    <source>
    </source>
</evidence>
<evidence type="ECO:0000303" key="4">
    <source>
    </source>
</evidence>
<name>FOGI_ASPRC</name>
<organism>
    <name type="scientific">Aspergillus ruber (strain CBS 135680)</name>
    <dbReference type="NCBI Taxonomy" id="1388766"/>
    <lineage>
        <taxon>Eukaryota</taxon>
        <taxon>Fungi</taxon>
        <taxon>Dikarya</taxon>
        <taxon>Ascomycota</taxon>
        <taxon>Pezizomycotina</taxon>
        <taxon>Eurotiomycetes</taxon>
        <taxon>Eurotiomycetidae</taxon>
        <taxon>Eurotiales</taxon>
        <taxon>Aspergillaceae</taxon>
        <taxon>Aspergillus</taxon>
        <taxon>Aspergillus subgen. Aspergillus</taxon>
    </lineage>
</organism>
<proteinExistence type="inferred from homology"/>
<reference key="1">
    <citation type="journal article" date="2014" name="Nat. Commun.">
        <title>Genomic adaptations of the halophilic Dead Sea filamentous fungus Eurotium rubrum.</title>
        <authorList>
            <person name="Kis-Papo T."/>
            <person name="Weig A.R."/>
            <person name="Riley R."/>
            <person name="Persoh D."/>
            <person name="Salamov A."/>
            <person name="Sun H."/>
            <person name="Lipzen A."/>
            <person name="Wasser S.P."/>
            <person name="Rambold G."/>
            <person name="Grigoriev I.V."/>
            <person name="Nevo E."/>
        </authorList>
    </citation>
    <scope>NUCLEOTIDE SEQUENCE [LARGE SCALE GENOMIC DNA]</scope>
    <source>
        <strain>CBS 135680</strain>
    </source>
</reference>
<reference key="2">
    <citation type="journal article" date="2020" name="Org. Lett.">
        <title>Biosynthesis of the prenylated salicylaldehyde flavoglaucin requires temporary reduction to salicyl alcohol for decoration before reoxidation to the final product.</title>
        <authorList>
            <person name="Nies J."/>
            <person name="Ran H."/>
            <person name="Wohlgemuth V."/>
            <person name="Yin W.B."/>
            <person name="Li S.M."/>
        </authorList>
    </citation>
    <scope>FUNCTION</scope>
    <scope>DISRUPTION PHENOTYPE</scope>
</reference>
<feature type="chain" id="PRO_0000456596" description="Transcriptional regulator fogI">
    <location>
        <begin position="1"/>
        <end position="415"/>
    </location>
</feature>
<feature type="DNA-binding region" description="Zn(2)-C6 fungal-type" evidence="1">
    <location>
        <begin position="12"/>
        <end position="39"/>
    </location>
</feature>
<feature type="region of interest" description="Disordered" evidence="2">
    <location>
        <begin position="50"/>
        <end position="153"/>
    </location>
</feature>
<feature type="compositionally biased region" description="Low complexity" evidence="2">
    <location>
        <begin position="80"/>
        <end position="102"/>
    </location>
</feature>
<feature type="compositionally biased region" description="Low complexity" evidence="2">
    <location>
        <begin position="123"/>
        <end position="135"/>
    </location>
</feature>
<accession>A0A017SE85</accession>
<dbReference type="EMBL" id="KK088422">
    <property type="protein sequence ID" value="EYE95343.1"/>
    <property type="molecule type" value="Genomic_DNA"/>
</dbReference>
<dbReference type="SMR" id="A0A017SE85"/>
<dbReference type="HOGENOM" id="CLU_615532_0_0_1"/>
<dbReference type="OrthoDB" id="5069333at2759"/>
<dbReference type="Proteomes" id="UP000019804">
    <property type="component" value="Unassembled WGS sequence"/>
</dbReference>
<dbReference type="GO" id="GO:0005634">
    <property type="term" value="C:nucleus"/>
    <property type="evidence" value="ECO:0007669"/>
    <property type="project" value="UniProtKB-SubCell"/>
</dbReference>
<dbReference type="GO" id="GO:0003677">
    <property type="term" value="F:DNA binding"/>
    <property type="evidence" value="ECO:0007669"/>
    <property type="project" value="UniProtKB-KW"/>
</dbReference>
<dbReference type="GO" id="GO:0000981">
    <property type="term" value="F:DNA-binding transcription factor activity, RNA polymerase II-specific"/>
    <property type="evidence" value="ECO:0007669"/>
    <property type="project" value="InterPro"/>
</dbReference>
<dbReference type="GO" id="GO:0008270">
    <property type="term" value="F:zinc ion binding"/>
    <property type="evidence" value="ECO:0007669"/>
    <property type="project" value="InterPro"/>
</dbReference>
<dbReference type="CDD" id="cd00067">
    <property type="entry name" value="GAL4"/>
    <property type="match status" value="1"/>
</dbReference>
<dbReference type="Gene3D" id="4.10.240.10">
    <property type="entry name" value="Zn(2)-C6 fungal-type DNA-binding domain"/>
    <property type="match status" value="1"/>
</dbReference>
<dbReference type="InterPro" id="IPR050675">
    <property type="entry name" value="OAF3"/>
</dbReference>
<dbReference type="InterPro" id="IPR036864">
    <property type="entry name" value="Zn2-C6_fun-type_DNA-bd_sf"/>
</dbReference>
<dbReference type="InterPro" id="IPR001138">
    <property type="entry name" value="Zn2Cys6_DnaBD"/>
</dbReference>
<dbReference type="PANTHER" id="PTHR31069:SF31">
    <property type="entry name" value="MONODICTYPHENONE CLUSTER TRANSCRIPTION FACTOR-RELATED"/>
    <property type="match status" value="1"/>
</dbReference>
<dbReference type="PANTHER" id="PTHR31069">
    <property type="entry name" value="OLEATE-ACTIVATED TRANSCRIPTION FACTOR 1-RELATED"/>
    <property type="match status" value="1"/>
</dbReference>
<dbReference type="Pfam" id="PF00172">
    <property type="entry name" value="Zn_clus"/>
    <property type="match status" value="1"/>
</dbReference>
<dbReference type="PRINTS" id="PR00755">
    <property type="entry name" value="AFLATOXINBRP"/>
</dbReference>
<dbReference type="SMART" id="SM00066">
    <property type="entry name" value="GAL4"/>
    <property type="match status" value="1"/>
</dbReference>
<dbReference type="SUPFAM" id="SSF57701">
    <property type="entry name" value="Zn2/Cys6 DNA-binding domain"/>
    <property type="match status" value="1"/>
</dbReference>
<dbReference type="PROSITE" id="PS50048">
    <property type="entry name" value="ZN2_CY6_FUNGAL_2"/>
    <property type="match status" value="1"/>
</dbReference>
<sequence>MDGKTYKLRASCNACNESKVRCSQTKPTCARCERNKTTCVYGLSRRTHKDAPPISLSHSHSHSHSGSQPHSHSGSRRSSVHIPNATATANATTTANYTSTTTPFMPLHENSMTSYPPQPSVDQFFAQQQPHHQQPSTAGPGPGILSPANLDLPSFMTPLPTPNEDHTNSLFSSFGNFAAGVGGVNGSVNNILTPLTGSPGTGTSASTSTDMFQQPQVQECTCHAGVMEQMASMSQPSRNEERRLSLDVQLSQLKRCIIASEASMGCGHHGNGDSEPINIISVAMLIGRIIDEFELMLNERIGRGTTMPERERSLSLDEATISIREPRLCWGVLELEDDDEVELRQRLYLLYFRKLERLLSQLNVFVRTLHDSRGGSCNPTFIMACEYIHLWLEKKAEGVKRLFPAADEYTGRIPS</sequence>
<protein>
    <recommendedName>
        <fullName evidence="4">Transcriptional regulator fogI</fullName>
    </recommendedName>
    <alternativeName>
        <fullName evidence="4">Flavoglaucin biosynthesis cluster protein I</fullName>
    </alternativeName>
</protein>